<gene>
    <name type="ordered locus">XF_1998</name>
</gene>
<reference key="1">
    <citation type="journal article" date="2000" name="Nature">
        <title>The genome sequence of the plant pathogen Xylella fastidiosa.</title>
        <authorList>
            <person name="Simpson A.J.G."/>
            <person name="Reinach F.C."/>
            <person name="Arruda P."/>
            <person name="Abreu F.A."/>
            <person name="Acencio M."/>
            <person name="Alvarenga R."/>
            <person name="Alves L.M.C."/>
            <person name="Araya J.E."/>
            <person name="Baia G.S."/>
            <person name="Baptista C.S."/>
            <person name="Barros M.H."/>
            <person name="Bonaccorsi E.D."/>
            <person name="Bordin S."/>
            <person name="Bove J.M."/>
            <person name="Briones M.R.S."/>
            <person name="Bueno M.R.P."/>
            <person name="Camargo A.A."/>
            <person name="Camargo L.E.A."/>
            <person name="Carraro D.M."/>
            <person name="Carrer H."/>
            <person name="Colauto N.B."/>
            <person name="Colombo C."/>
            <person name="Costa F.F."/>
            <person name="Costa M.C.R."/>
            <person name="Costa-Neto C.M."/>
            <person name="Coutinho L.L."/>
            <person name="Cristofani M."/>
            <person name="Dias-Neto E."/>
            <person name="Docena C."/>
            <person name="El-Dorry H."/>
            <person name="Facincani A.P."/>
            <person name="Ferreira A.J.S."/>
            <person name="Ferreira V.C.A."/>
            <person name="Ferro J.A."/>
            <person name="Fraga J.S."/>
            <person name="Franca S.C."/>
            <person name="Franco M.C."/>
            <person name="Frohme M."/>
            <person name="Furlan L.R."/>
            <person name="Garnier M."/>
            <person name="Goldman G.H."/>
            <person name="Goldman M.H.S."/>
            <person name="Gomes S.L."/>
            <person name="Gruber A."/>
            <person name="Ho P.L."/>
            <person name="Hoheisel J.D."/>
            <person name="Junqueira M.L."/>
            <person name="Kemper E.L."/>
            <person name="Kitajima J.P."/>
            <person name="Krieger J.E."/>
            <person name="Kuramae E.E."/>
            <person name="Laigret F."/>
            <person name="Lambais M.R."/>
            <person name="Leite L.C.C."/>
            <person name="Lemos E.G.M."/>
            <person name="Lemos M.V.F."/>
            <person name="Lopes S.A."/>
            <person name="Lopes C.R."/>
            <person name="Machado J.A."/>
            <person name="Machado M.A."/>
            <person name="Madeira A.M.B.N."/>
            <person name="Madeira H.M.F."/>
            <person name="Marino C.L."/>
            <person name="Marques M.V."/>
            <person name="Martins E.A.L."/>
            <person name="Martins E.M.F."/>
            <person name="Matsukuma A.Y."/>
            <person name="Menck C.F.M."/>
            <person name="Miracca E.C."/>
            <person name="Miyaki C.Y."/>
            <person name="Monteiro-Vitorello C.B."/>
            <person name="Moon D.H."/>
            <person name="Nagai M.A."/>
            <person name="Nascimento A.L.T.O."/>
            <person name="Netto L.E.S."/>
            <person name="Nhani A. Jr."/>
            <person name="Nobrega F.G."/>
            <person name="Nunes L.R."/>
            <person name="Oliveira M.A."/>
            <person name="de Oliveira M.C."/>
            <person name="de Oliveira R.C."/>
            <person name="Palmieri D.A."/>
            <person name="Paris A."/>
            <person name="Peixoto B.R."/>
            <person name="Pereira G.A.G."/>
            <person name="Pereira H.A. Jr."/>
            <person name="Pesquero J.B."/>
            <person name="Quaggio R.B."/>
            <person name="Roberto P.G."/>
            <person name="Rodrigues V."/>
            <person name="de Rosa A.J.M."/>
            <person name="de Rosa V.E. Jr."/>
            <person name="de Sa R.G."/>
            <person name="Santelli R.V."/>
            <person name="Sawasaki H.E."/>
            <person name="da Silva A.C.R."/>
            <person name="da Silva A.M."/>
            <person name="da Silva F.R."/>
            <person name="Silva W.A. Jr."/>
            <person name="da Silveira J.F."/>
            <person name="Silvestri M.L.Z."/>
            <person name="Siqueira W.J."/>
            <person name="de Souza A.A."/>
            <person name="de Souza A.P."/>
            <person name="Terenzi M.F."/>
            <person name="Truffi D."/>
            <person name="Tsai S.M."/>
            <person name="Tsuhako M.H."/>
            <person name="Vallada H."/>
            <person name="Van Sluys M.A."/>
            <person name="Verjovski-Almeida S."/>
            <person name="Vettore A.L."/>
            <person name="Zago M.A."/>
            <person name="Zatz M."/>
            <person name="Meidanis J."/>
            <person name="Setubal J.C."/>
        </authorList>
    </citation>
    <scope>NUCLEOTIDE SEQUENCE [LARGE SCALE GENOMIC DNA]</scope>
    <source>
        <strain>9a5c</strain>
    </source>
</reference>
<feature type="chain" id="PRO_0000203911" description="Putative Fis-like DNA-binding protein">
    <location>
        <begin position="1"/>
        <end position="90"/>
    </location>
</feature>
<feature type="DNA-binding region" description="H-T-H motif" evidence="1">
    <location>
        <begin position="66"/>
        <end position="85"/>
    </location>
</feature>
<comment type="similarity">
    <text evidence="2">Belongs to the transcriptional regulatory Fis family.</text>
</comment>
<protein>
    <recommendedName>
        <fullName>Putative Fis-like DNA-binding protein</fullName>
    </recommendedName>
</protein>
<accession>Q9PBY7</accession>
<keyword id="KW-0238">DNA-binding</keyword>
<organism>
    <name type="scientific">Xylella fastidiosa (strain 9a5c)</name>
    <dbReference type="NCBI Taxonomy" id="160492"/>
    <lineage>
        <taxon>Bacteria</taxon>
        <taxon>Pseudomonadati</taxon>
        <taxon>Pseudomonadota</taxon>
        <taxon>Gammaproteobacteria</taxon>
        <taxon>Lysobacterales</taxon>
        <taxon>Lysobacteraceae</taxon>
        <taxon>Xylella</taxon>
    </lineage>
</organism>
<dbReference type="EMBL" id="AE003849">
    <property type="protein sequence ID" value="AAF84800.1"/>
    <property type="molecule type" value="Genomic_DNA"/>
</dbReference>
<dbReference type="PIR" id="H82611">
    <property type="entry name" value="H82611"/>
</dbReference>
<dbReference type="SMR" id="Q9PBY7"/>
<dbReference type="STRING" id="160492.XF_1998"/>
<dbReference type="KEGG" id="xfa:XF_1998"/>
<dbReference type="eggNOG" id="COG2901">
    <property type="taxonomic scope" value="Bacteria"/>
</dbReference>
<dbReference type="HOGENOM" id="CLU_158040_3_0_6"/>
<dbReference type="Proteomes" id="UP000000812">
    <property type="component" value="Chromosome"/>
</dbReference>
<dbReference type="GO" id="GO:0043565">
    <property type="term" value="F:sequence-specific DNA binding"/>
    <property type="evidence" value="ECO:0007669"/>
    <property type="project" value="InterPro"/>
</dbReference>
<dbReference type="GO" id="GO:0006355">
    <property type="term" value="P:regulation of DNA-templated transcription"/>
    <property type="evidence" value="ECO:0007669"/>
    <property type="project" value="InterPro"/>
</dbReference>
<dbReference type="Gene3D" id="1.10.10.60">
    <property type="entry name" value="Homeodomain-like"/>
    <property type="match status" value="1"/>
</dbReference>
<dbReference type="InterPro" id="IPR005412">
    <property type="entry name" value="Fis_DNA-bd"/>
</dbReference>
<dbReference type="InterPro" id="IPR009057">
    <property type="entry name" value="Homeodomain-like_sf"/>
</dbReference>
<dbReference type="InterPro" id="IPR002197">
    <property type="entry name" value="HTH_Fis"/>
</dbReference>
<dbReference type="InterPro" id="IPR050207">
    <property type="entry name" value="Trans_regulatory_Fis"/>
</dbReference>
<dbReference type="NCBIfam" id="NF001659">
    <property type="entry name" value="PRK00430.1"/>
    <property type="match status" value="1"/>
</dbReference>
<dbReference type="PANTHER" id="PTHR47918">
    <property type="entry name" value="DNA-BINDING PROTEIN FIS"/>
    <property type="match status" value="1"/>
</dbReference>
<dbReference type="PANTHER" id="PTHR47918:SF1">
    <property type="entry name" value="DNA-BINDING PROTEIN FIS"/>
    <property type="match status" value="1"/>
</dbReference>
<dbReference type="Pfam" id="PF02954">
    <property type="entry name" value="HTH_8"/>
    <property type="match status" value="1"/>
</dbReference>
<dbReference type="PIRSF" id="PIRSF002097">
    <property type="entry name" value="DNA-binding_Fis"/>
    <property type="match status" value="1"/>
</dbReference>
<dbReference type="PRINTS" id="PR01591">
    <property type="entry name" value="DNABINDNGFIS"/>
</dbReference>
<dbReference type="PRINTS" id="PR01590">
    <property type="entry name" value="HTHFIS"/>
</dbReference>
<dbReference type="SUPFAM" id="SSF46689">
    <property type="entry name" value="Homeodomain-like"/>
    <property type="match status" value="1"/>
</dbReference>
<evidence type="ECO:0000250" key="1"/>
<evidence type="ECO:0000305" key="2"/>
<name>FISL_XYLFA</name>
<proteinExistence type="inferred from homology"/>
<sequence>MNVVPSRPEVSRGSPKSPLREHVAQVVRRYLRDLDGCDVNDLYNMVLHEMEIPLLVEVLNHCEGNQSRAAALLGIHRATLRKKLKEYGLV</sequence>